<organism>
    <name type="scientific">Streptococcus agalactiae serotype III (strain NEM316)</name>
    <dbReference type="NCBI Taxonomy" id="211110"/>
    <lineage>
        <taxon>Bacteria</taxon>
        <taxon>Bacillati</taxon>
        <taxon>Bacillota</taxon>
        <taxon>Bacilli</taxon>
        <taxon>Lactobacillales</taxon>
        <taxon>Streptococcaceae</taxon>
        <taxon>Streptococcus</taxon>
    </lineage>
</organism>
<sequence length="296" mass="32357">MLYQQIASNKRKTVVLLIVFFCLLAAIGAAVGYLVLGSYQFGLVLALIIGVIYAVSMIFQSTNVVMSMNNAREVTEDEAPNYFHIVEDMAMVAQIPMPRVFIVEDDSLNAFATGSKPENAAVAATTGLLAVMNREELEGVIGHEVSHIRNYDIRISTIAVALASAVTLISSIGSRMLFYGGGRRRDDDREDGGNILVLIFSILSLILAPLAASLVQLAISRQREYLADASSVELTRNPQGMISALEKLDRSEPMGHPVDDASAALYINDPTKKEGLKSLFYTHPPIADRIERLRHM</sequence>
<evidence type="ECO:0000255" key="1">
    <source>
        <dbReference type="HAMAP-Rule" id="MF_00188"/>
    </source>
</evidence>
<reference key="1">
    <citation type="journal article" date="2002" name="Mol. Microbiol.">
        <title>Genome sequence of Streptococcus agalactiae, a pathogen causing invasive neonatal disease.</title>
        <authorList>
            <person name="Glaser P."/>
            <person name="Rusniok C."/>
            <person name="Buchrieser C."/>
            <person name="Chevalier F."/>
            <person name="Frangeul L."/>
            <person name="Msadek T."/>
            <person name="Zouine M."/>
            <person name="Couve E."/>
            <person name="Lalioui L."/>
            <person name="Poyart C."/>
            <person name="Trieu-Cuot P."/>
            <person name="Kunst F."/>
        </authorList>
    </citation>
    <scope>NUCLEOTIDE SEQUENCE [LARGE SCALE GENOMIC DNA]</scope>
    <source>
        <strain>NEM316</strain>
    </source>
</reference>
<protein>
    <recommendedName>
        <fullName evidence="1">Protease HtpX homolog</fullName>
        <ecNumber evidence="1">3.4.24.-</ecNumber>
    </recommendedName>
</protein>
<name>HTPX_STRA3</name>
<feature type="chain" id="PRO_0000138890" description="Protease HtpX homolog">
    <location>
        <begin position="1"/>
        <end position="296"/>
    </location>
</feature>
<feature type="transmembrane region" description="Helical" evidence="1">
    <location>
        <begin position="14"/>
        <end position="34"/>
    </location>
</feature>
<feature type="transmembrane region" description="Helical" evidence="1">
    <location>
        <begin position="39"/>
        <end position="59"/>
    </location>
</feature>
<feature type="transmembrane region" description="Helical" evidence="1">
    <location>
        <begin position="158"/>
        <end position="178"/>
    </location>
</feature>
<feature type="transmembrane region" description="Helical" evidence="1">
    <location>
        <begin position="195"/>
        <end position="215"/>
    </location>
</feature>
<feature type="active site" evidence="1">
    <location>
        <position position="144"/>
    </location>
</feature>
<feature type="binding site" evidence="1">
    <location>
        <position position="143"/>
    </location>
    <ligand>
        <name>Zn(2+)</name>
        <dbReference type="ChEBI" id="CHEBI:29105"/>
        <note>catalytic</note>
    </ligand>
</feature>
<feature type="binding site" evidence="1">
    <location>
        <position position="147"/>
    </location>
    <ligand>
        <name>Zn(2+)</name>
        <dbReference type="ChEBI" id="CHEBI:29105"/>
        <note>catalytic</note>
    </ligand>
</feature>
<feature type="binding site" evidence="1">
    <location>
        <position position="224"/>
    </location>
    <ligand>
        <name>Zn(2+)</name>
        <dbReference type="ChEBI" id="CHEBI:29105"/>
        <note>catalytic</note>
    </ligand>
</feature>
<gene>
    <name evidence="1" type="primary">htpX</name>
    <name type="ordered locus">gbs1674</name>
</gene>
<dbReference type="EC" id="3.4.24.-" evidence="1"/>
<dbReference type="EMBL" id="AL766852">
    <property type="protein sequence ID" value="CAD47333.1"/>
    <property type="molecule type" value="Genomic_DNA"/>
</dbReference>
<dbReference type="RefSeq" id="WP_000966819.1">
    <property type="nucleotide sequence ID" value="NC_004368.1"/>
</dbReference>
<dbReference type="KEGG" id="san:gbs1674"/>
<dbReference type="eggNOG" id="COG0501">
    <property type="taxonomic scope" value="Bacteria"/>
</dbReference>
<dbReference type="HOGENOM" id="CLU_042266_2_1_9"/>
<dbReference type="Proteomes" id="UP000000823">
    <property type="component" value="Chromosome"/>
</dbReference>
<dbReference type="GO" id="GO:0005886">
    <property type="term" value="C:plasma membrane"/>
    <property type="evidence" value="ECO:0007669"/>
    <property type="project" value="UniProtKB-SubCell"/>
</dbReference>
<dbReference type="GO" id="GO:0004222">
    <property type="term" value="F:metalloendopeptidase activity"/>
    <property type="evidence" value="ECO:0007669"/>
    <property type="project" value="UniProtKB-UniRule"/>
</dbReference>
<dbReference type="GO" id="GO:0008270">
    <property type="term" value="F:zinc ion binding"/>
    <property type="evidence" value="ECO:0007669"/>
    <property type="project" value="UniProtKB-UniRule"/>
</dbReference>
<dbReference type="GO" id="GO:0006508">
    <property type="term" value="P:proteolysis"/>
    <property type="evidence" value="ECO:0007669"/>
    <property type="project" value="UniProtKB-KW"/>
</dbReference>
<dbReference type="CDD" id="cd07340">
    <property type="entry name" value="M48B_Htpx_like"/>
    <property type="match status" value="1"/>
</dbReference>
<dbReference type="Gene3D" id="3.30.2010.10">
    <property type="entry name" value="Metalloproteases ('zincins'), catalytic domain"/>
    <property type="match status" value="1"/>
</dbReference>
<dbReference type="HAMAP" id="MF_00188">
    <property type="entry name" value="Pept_M48_protease_HtpX"/>
    <property type="match status" value="1"/>
</dbReference>
<dbReference type="InterPro" id="IPR050083">
    <property type="entry name" value="HtpX_protease"/>
</dbReference>
<dbReference type="InterPro" id="IPR022919">
    <property type="entry name" value="Pept_M48_protease_HtpX"/>
</dbReference>
<dbReference type="InterPro" id="IPR001915">
    <property type="entry name" value="Peptidase_M48"/>
</dbReference>
<dbReference type="NCBIfam" id="NF003425">
    <property type="entry name" value="PRK04897.1"/>
    <property type="match status" value="1"/>
</dbReference>
<dbReference type="PANTHER" id="PTHR43221">
    <property type="entry name" value="PROTEASE HTPX"/>
    <property type="match status" value="1"/>
</dbReference>
<dbReference type="PANTHER" id="PTHR43221:SF1">
    <property type="entry name" value="PROTEASE HTPX"/>
    <property type="match status" value="1"/>
</dbReference>
<dbReference type="Pfam" id="PF01435">
    <property type="entry name" value="Peptidase_M48"/>
    <property type="match status" value="1"/>
</dbReference>
<keyword id="KW-1003">Cell membrane</keyword>
<keyword id="KW-0378">Hydrolase</keyword>
<keyword id="KW-0472">Membrane</keyword>
<keyword id="KW-0479">Metal-binding</keyword>
<keyword id="KW-0482">Metalloprotease</keyword>
<keyword id="KW-0645">Protease</keyword>
<keyword id="KW-0812">Transmembrane</keyword>
<keyword id="KW-1133">Transmembrane helix</keyword>
<keyword id="KW-0862">Zinc</keyword>
<proteinExistence type="inferred from homology"/>
<comment type="cofactor">
    <cofactor evidence="1">
        <name>Zn(2+)</name>
        <dbReference type="ChEBI" id="CHEBI:29105"/>
    </cofactor>
    <text evidence="1">Binds 1 zinc ion per subunit.</text>
</comment>
<comment type="subcellular location">
    <subcellularLocation>
        <location evidence="1">Cell membrane</location>
        <topology evidence="1">Multi-pass membrane protein</topology>
    </subcellularLocation>
</comment>
<comment type="similarity">
    <text evidence="1">Belongs to the peptidase M48B family.</text>
</comment>
<accession>Q8E3T2</accession>